<feature type="chain" id="PRO_0000133965" description="Enolase">
    <location>
        <begin position="1"/>
        <end position="434"/>
    </location>
</feature>
<feature type="active site" description="Proton donor" evidence="1">
    <location>
        <position position="207"/>
    </location>
</feature>
<feature type="active site" description="Proton acceptor" evidence="1">
    <location>
        <position position="343"/>
    </location>
</feature>
<feature type="binding site" evidence="1">
    <location>
        <position position="165"/>
    </location>
    <ligand>
        <name>(2R)-2-phosphoglycerate</name>
        <dbReference type="ChEBI" id="CHEBI:58289"/>
    </ligand>
</feature>
<feature type="binding site" evidence="1">
    <location>
        <position position="244"/>
    </location>
    <ligand>
        <name>Mg(2+)</name>
        <dbReference type="ChEBI" id="CHEBI:18420"/>
    </ligand>
</feature>
<feature type="binding site" evidence="1">
    <location>
        <position position="291"/>
    </location>
    <ligand>
        <name>Mg(2+)</name>
        <dbReference type="ChEBI" id="CHEBI:18420"/>
    </ligand>
</feature>
<feature type="binding site" evidence="1">
    <location>
        <position position="318"/>
    </location>
    <ligand>
        <name>Mg(2+)</name>
        <dbReference type="ChEBI" id="CHEBI:18420"/>
    </ligand>
</feature>
<feature type="binding site" evidence="1">
    <location>
        <position position="343"/>
    </location>
    <ligand>
        <name>(2R)-2-phosphoglycerate</name>
        <dbReference type="ChEBI" id="CHEBI:58289"/>
    </ligand>
</feature>
<feature type="binding site" evidence="1">
    <location>
        <position position="372"/>
    </location>
    <ligand>
        <name>(2R)-2-phosphoglycerate</name>
        <dbReference type="ChEBI" id="CHEBI:58289"/>
    </ligand>
</feature>
<feature type="binding site" evidence="1">
    <location>
        <position position="373"/>
    </location>
    <ligand>
        <name>(2R)-2-phosphoglycerate</name>
        <dbReference type="ChEBI" id="CHEBI:58289"/>
    </ligand>
</feature>
<feature type="binding site" evidence="1">
    <location>
        <position position="394"/>
    </location>
    <ligand>
        <name>(2R)-2-phosphoglycerate</name>
        <dbReference type="ChEBI" id="CHEBI:58289"/>
    </ligand>
</feature>
<organism>
    <name type="scientific">Staphylococcus aureus (strain Mu50 / ATCC 700699)</name>
    <dbReference type="NCBI Taxonomy" id="158878"/>
    <lineage>
        <taxon>Bacteria</taxon>
        <taxon>Bacillati</taxon>
        <taxon>Bacillota</taxon>
        <taxon>Bacilli</taxon>
        <taxon>Bacillales</taxon>
        <taxon>Staphylococcaceae</taxon>
        <taxon>Staphylococcus</taxon>
    </lineage>
</organism>
<dbReference type="EC" id="4.2.1.11" evidence="1"/>
<dbReference type="EMBL" id="BA000017">
    <property type="protein sequence ID" value="BAB56938.1"/>
    <property type="molecule type" value="Genomic_DNA"/>
</dbReference>
<dbReference type="RefSeq" id="WP_001121760.1">
    <property type="nucleotide sequence ID" value="NC_002758.2"/>
</dbReference>
<dbReference type="SMR" id="P64078"/>
<dbReference type="KEGG" id="sav:SAV0776"/>
<dbReference type="HOGENOM" id="CLU_031223_2_1_9"/>
<dbReference type="PhylomeDB" id="P64078"/>
<dbReference type="UniPathway" id="UPA00109">
    <property type="reaction ID" value="UER00187"/>
</dbReference>
<dbReference type="Proteomes" id="UP000002481">
    <property type="component" value="Chromosome"/>
</dbReference>
<dbReference type="GO" id="GO:0009986">
    <property type="term" value="C:cell surface"/>
    <property type="evidence" value="ECO:0007669"/>
    <property type="project" value="UniProtKB-SubCell"/>
</dbReference>
<dbReference type="GO" id="GO:0005576">
    <property type="term" value="C:extracellular region"/>
    <property type="evidence" value="ECO:0007669"/>
    <property type="project" value="UniProtKB-SubCell"/>
</dbReference>
<dbReference type="GO" id="GO:0000015">
    <property type="term" value="C:phosphopyruvate hydratase complex"/>
    <property type="evidence" value="ECO:0007669"/>
    <property type="project" value="InterPro"/>
</dbReference>
<dbReference type="GO" id="GO:0000287">
    <property type="term" value="F:magnesium ion binding"/>
    <property type="evidence" value="ECO:0007669"/>
    <property type="project" value="UniProtKB-UniRule"/>
</dbReference>
<dbReference type="GO" id="GO:0004634">
    <property type="term" value="F:phosphopyruvate hydratase activity"/>
    <property type="evidence" value="ECO:0007669"/>
    <property type="project" value="UniProtKB-UniRule"/>
</dbReference>
<dbReference type="GO" id="GO:0006096">
    <property type="term" value="P:glycolytic process"/>
    <property type="evidence" value="ECO:0007669"/>
    <property type="project" value="UniProtKB-UniRule"/>
</dbReference>
<dbReference type="CDD" id="cd03313">
    <property type="entry name" value="enolase"/>
    <property type="match status" value="1"/>
</dbReference>
<dbReference type="FunFam" id="3.20.20.120:FF:000001">
    <property type="entry name" value="Enolase"/>
    <property type="match status" value="1"/>
</dbReference>
<dbReference type="FunFam" id="3.30.390.10:FF:000001">
    <property type="entry name" value="Enolase"/>
    <property type="match status" value="1"/>
</dbReference>
<dbReference type="Gene3D" id="3.20.20.120">
    <property type="entry name" value="Enolase-like C-terminal domain"/>
    <property type="match status" value="1"/>
</dbReference>
<dbReference type="Gene3D" id="3.30.390.10">
    <property type="entry name" value="Enolase-like, N-terminal domain"/>
    <property type="match status" value="1"/>
</dbReference>
<dbReference type="HAMAP" id="MF_00318">
    <property type="entry name" value="Enolase"/>
    <property type="match status" value="1"/>
</dbReference>
<dbReference type="InterPro" id="IPR000941">
    <property type="entry name" value="Enolase"/>
</dbReference>
<dbReference type="InterPro" id="IPR036849">
    <property type="entry name" value="Enolase-like_C_sf"/>
</dbReference>
<dbReference type="InterPro" id="IPR029017">
    <property type="entry name" value="Enolase-like_N"/>
</dbReference>
<dbReference type="InterPro" id="IPR020810">
    <property type="entry name" value="Enolase_C"/>
</dbReference>
<dbReference type="InterPro" id="IPR020809">
    <property type="entry name" value="Enolase_CS"/>
</dbReference>
<dbReference type="InterPro" id="IPR020811">
    <property type="entry name" value="Enolase_N"/>
</dbReference>
<dbReference type="NCBIfam" id="TIGR01060">
    <property type="entry name" value="eno"/>
    <property type="match status" value="1"/>
</dbReference>
<dbReference type="PANTHER" id="PTHR11902">
    <property type="entry name" value="ENOLASE"/>
    <property type="match status" value="1"/>
</dbReference>
<dbReference type="PANTHER" id="PTHR11902:SF1">
    <property type="entry name" value="ENOLASE"/>
    <property type="match status" value="1"/>
</dbReference>
<dbReference type="Pfam" id="PF00113">
    <property type="entry name" value="Enolase_C"/>
    <property type="match status" value="1"/>
</dbReference>
<dbReference type="Pfam" id="PF03952">
    <property type="entry name" value="Enolase_N"/>
    <property type="match status" value="1"/>
</dbReference>
<dbReference type="PIRSF" id="PIRSF001400">
    <property type="entry name" value="Enolase"/>
    <property type="match status" value="1"/>
</dbReference>
<dbReference type="PRINTS" id="PR00148">
    <property type="entry name" value="ENOLASE"/>
</dbReference>
<dbReference type="SFLD" id="SFLDF00002">
    <property type="entry name" value="enolase"/>
    <property type="match status" value="1"/>
</dbReference>
<dbReference type="SFLD" id="SFLDG00178">
    <property type="entry name" value="enolase"/>
    <property type="match status" value="1"/>
</dbReference>
<dbReference type="SMART" id="SM01192">
    <property type="entry name" value="Enolase_C"/>
    <property type="match status" value="1"/>
</dbReference>
<dbReference type="SMART" id="SM01193">
    <property type="entry name" value="Enolase_N"/>
    <property type="match status" value="1"/>
</dbReference>
<dbReference type="SUPFAM" id="SSF51604">
    <property type="entry name" value="Enolase C-terminal domain-like"/>
    <property type="match status" value="1"/>
</dbReference>
<dbReference type="SUPFAM" id="SSF54826">
    <property type="entry name" value="Enolase N-terminal domain-like"/>
    <property type="match status" value="1"/>
</dbReference>
<dbReference type="PROSITE" id="PS00164">
    <property type="entry name" value="ENOLASE"/>
    <property type="match status" value="1"/>
</dbReference>
<gene>
    <name evidence="1" type="primary">eno</name>
    <name type="ordered locus">SAV0776</name>
</gene>
<name>ENO_STAAM</name>
<accession>P64078</accession>
<accession>Q99VK5</accession>
<proteinExistence type="inferred from homology"/>
<evidence type="ECO:0000255" key="1">
    <source>
        <dbReference type="HAMAP-Rule" id="MF_00318"/>
    </source>
</evidence>
<comment type="function">
    <text evidence="1">Catalyzes the reversible conversion of 2-phosphoglycerate (2-PG) into phosphoenolpyruvate (PEP). It is essential for the degradation of carbohydrates via glycolysis.</text>
</comment>
<comment type="catalytic activity">
    <reaction evidence="1">
        <text>(2R)-2-phosphoglycerate = phosphoenolpyruvate + H2O</text>
        <dbReference type="Rhea" id="RHEA:10164"/>
        <dbReference type="ChEBI" id="CHEBI:15377"/>
        <dbReference type="ChEBI" id="CHEBI:58289"/>
        <dbReference type="ChEBI" id="CHEBI:58702"/>
        <dbReference type="EC" id="4.2.1.11"/>
    </reaction>
</comment>
<comment type="cofactor">
    <cofactor evidence="1">
        <name>Mg(2+)</name>
        <dbReference type="ChEBI" id="CHEBI:18420"/>
    </cofactor>
    <text evidence="1">Binds a second Mg(2+) ion via substrate during catalysis.</text>
</comment>
<comment type="pathway">
    <text evidence="1">Carbohydrate degradation; glycolysis; pyruvate from D-glyceraldehyde 3-phosphate: step 4/5.</text>
</comment>
<comment type="subcellular location">
    <subcellularLocation>
        <location evidence="1">Cytoplasm</location>
    </subcellularLocation>
    <subcellularLocation>
        <location evidence="1">Secreted</location>
    </subcellularLocation>
    <subcellularLocation>
        <location evidence="1">Cell surface</location>
    </subcellularLocation>
    <text evidence="1">Fractions of enolase are present in both the cytoplasm and on the cell surface.</text>
</comment>
<comment type="similarity">
    <text evidence="1">Belongs to the enolase family.</text>
</comment>
<reference key="1">
    <citation type="journal article" date="2001" name="Lancet">
        <title>Whole genome sequencing of meticillin-resistant Staphylococcus aureus.</title>
        <authorList>
            <person name="Kuroda M."/>
            <person name="Ohta T."/>
            <person name="Uchiyama I."/>
            <person name="Baba T."/>
            <person name="Yuzawa H."/>
            <person name="Kobayashi I."/>
            <person name="Cui L."/>
            <person name="Oguchi A."/>
            <person name="Aoki K."/>
            <person name="Nagai Y."/>
            <person name="Lian J.-Q."/>
            <person name="Ito T."/>
            <person name="Kanamori M."/>
            <person name="Matsumaru H."/>
            <person name="Maruyama A."/>
            <person name="Murakami H."/>
            <person name="Hosoyama A."/>
            <person name="Mizutani-Ui Y."/>
            <person name="Takahashi N.K."/>
            <person name="Sawano T."/>
            <person name="Inoue R."/>
            <person name="Kaito C."/>
            <person name="Sekimizu K."/>
            <person name="Hirakawa H."/>
            <person name="Kuhara S."/>
            <person name="Goto S."/>
            <person name="Yabuzaki J."/>
            <person name="Kanehisa M."/>
            <person name="Yamashita A."/>
            <person name="Oshima K."/>
            <person name="Furuya K."/>
            <person name="Yoshino C."/>
            <person name="Shiba T."/>
            <person name="Hattori M."/>
            <person name="Ogasawara N."/>
            <person name="Hayashi H."/>
            <person name="Hiramatsu K."/>
        </authorList>
    </citation>
    <scope>NUCLEOTIDE SEQUENCE [LARGE SCALE GENOMIC DNA]</scope>
    <source>
        <strain>Mu50 / ATCC 700699</strain>
    </source>
</reference>
<sequence length="434" mass="47117">MPIITDVYAREVLDSRGNPTVEVEVLTESGAFGRALVPSGASTGEHEAVELRDGDKSRYLGKGVTKAVENVNEIIAPEIIEGEFSVLDQVSIDKMMIALDGTPNKGKLGANAILGVSIAVARAAADLLGQPLYKYLGGFNGKQLPVPMMNIVNGGSHSDAPIAFQEFMILPVGATTFKESLRWGTEIFHNLKSILSKRGLETAVGDEGGFAPKFEGTEDAVETIIQAIEAAGYKPGEEVFLGFDCASSEFYENGVYDYSKFEGEHGAKRTAAEQVDYLEQLVDKYPIITIEDGMDENDWDGWKQLTERIGDRVQLVGDDLFVTNTEILAKGIENGIGNSILIKVNQIGTLTETFDAIEMAQKAGYTAVVSHRSGETEDTTIADIAVATNAGQIKTGSLSRTDRIAKYNQLLRIEDELFETAKYDGIKSFYNLDK</sequence>
<keyword id="KW-0963">Cytoplasm</keyword>
<keyword id="KW-0324">Glycolysis</keyword>
<keyword id="KW-0456">Lyase</keyword>
<keyword id="KW-0460">Magnesium</keyword>
<keyword id="KW-0479">Metal-binding</keyword>
<keyword id="KW-0964">Secreted</keyword>
<keyword id="KW-0843">Virulence</keyword>
<protein>
    <recommendedName>
        <fullName evidence="1">Enolase</fullName>
        <ecNumber evidence="1">4.2.1.11</ecNumber>
    </recommendedName>
    <alternativeName>
        <fullName evidence="1">2-phospho-D-glycerate hydro-lyase</fullName>
    </alternativeName>
    <alternativeName>
        <fullName evidence="1">2-phosphoglycerate dehydratase</fullName>
    </alternativeName>
</protein>